<gene>
    <name type="ordered locus">OB0043</name>
</gene>
<keyword id="KW-1185">Reference proteome</keyword>
<comment type="similarity">
    <text evidence="2">Belongs to the UPF0213 family.</text>
</comment>
<accession>Q8EU46</accession>
<evidence type="ECO:0000255" key="1">
    <source>
        <dbReference type="PROSITE-ProRule" id="PRU00977"/>
    </source>
</evidence>
<evidence type="ECO:0000305" key="2"/>
<sequence>MDEQHYVYILRCRDQSLYTGYTNNLEHRLQMHETGKGAKYTRGRGPFEVLYVKKFINKSEAMQEEYRIKQLPRFEKLKLIEFQEQE</sequence>
<proteinExistence type="inferred from homology"/>
<reference key="1">
    <citation type="journal article" date="2002" name="Nucleic Acids Res.">
        <title>Genome sequence of Oceanobacillus iheyensis isolated from the Iheya Ridge and its unexpected adaptive capabilities to extreme environments.</title>
        <authorList>
            <person name="Takami H."/>
            <person name="Takaki Y."/>
            <person name="Uchiyama I."/>
        </authorList>
    </citation>
    <scope>NUCLEOTIDE SEQUENCE [LARGE SCALE GENOMIC DNA]</scope>
    <source>
        <strain>DSM 14371 / CIP 107618 / JCM 11309 / KCTC 3954 / HTE831</strain>
    </source>
</reference>
<dbReference type="EMBL" id="BA000028">
    <property type="protein sequence ID" value="BAC11999.1"/>
    <property type="molecule type" value="Genomic_DNA"/>
</dbReference>
<dbReference type="RefSeq" id="WP_011064445.1">
    <property type="nucleotide sequence ID" value="NC_004193.1"/>
</dbReference>
<dbReference type="SMR" id="Q8EU46"/>
<dbReference type="STRING" id="221109.gene:10732205"/>
<dbReference type="KEGG" id="oih:OB0043"/>
<dbReference type="eggNOG" id="COG2827">
    <property type="taxonomic scope" value="Bacteria"/>
</dbReference>
<dbReference type="HOGENOM" id="CLU_135650_0_3_9"/>
<dbReference type="OrthoDB" id="9807770at2"/>
<dbReference type="PhylomeDB" id="Q8EU46"/>
<dbReference type="Proteomes" id="UP000000822">
    <property type="component" value="Chromosome"/>
</dbReference>
<dbReference type="CDD" id="cd10456">
    <property type="entry name" value="GIY-YIG_UPF0213"/>
    <property type="match status" value="1"/>
</dbReference>
<dbReference type="Gene3D" id="3.40.1440.10">
    <property type="entry name" value="GIY-YIG endonuclease"/>
    <property type="match status" value="1"/>
</dbReference>
<dbReference type="InterPro" id="IPR000305">
    <property type="entry name" value="GIY-YIG_endonuc"/>
</dbReference>
<dbReference type="InterPro" id="IPR035901">
    <property type="entry name" value="GIY-YIG_endonuc_sf"/>
</dbReference>
<dbReference type="InterPro" id="IPR050190">
    <property type="entry name" value="UPF0213_domain"/>
</dbReference>
<dbReference type="PANTHER" id="PTHR34477">
    <property type="entry name" value="UPF0213 PROTEIN YHBQ"/>
    <property type="match status" value="1"/>
</dbReference>
<dbReference type="PANTHER" id="PTHR34477:SF1">
    <property type="entry name" value="UPF0213 PROTEIN YHBQ"/>
    <property type="match status" value="1"/>
</dbReference>
<dbReference type="Pfam" id="PF01541">
    <property type="entry name" value="GIY-YIG"/>
    <property type="match status" value="1"/>
</dbReference>
<dbReference type="SUPFAM" id="SSF82771">
    <property type="entry name" value="GIY-YIG endonuclease"/>
    <property type="match status" value="1"/>
</dbReference>
<dbReference type="PROSITE" id="PS50164">
    <property type="entry name" value="GIY_YIG"/>
    <property type="match status" value="1"/>
</dbReference>
<organism>
    <name type="scientific">Oceanobacillus iheyensis (strain DSM 14371 / CIP 107618 / JCM 11309 / KCTC 3954 / HTE831)</name>
    <dbReference type="NCBI Taxonomy" id="221109"/>
    <lineage>
        <taxon>Bacteria</taxon>
        <taxon>Bacillati</taxon>
        <taxon>Bacillota</taxon>
        <taxon>Bacilli</taxon>
        <taxon>Bacillales</taxon>
        <taxon>Bacillaceae</taxon>
        <taxon>Oceanobacillus</taxon>
    </lineage>
</organism>
<name>Y043_OCEIH</name>
<feature type="chain" id="PRO_0000161372" description="UPF0213 protein OB0043">
    <location>
        <begin position="1"/>
        <end position="86"/>
    </location>
</feature>
<feature type="domain" description="GIY-YIG" evidence="1">
    <location>
        <begin position="3"/>
        <end position="80"/>
    </location>
</feature>
<protein>
    <recommendedName>
        <fullName>UPF0213 protein OB0043</fullName>
    </recommendedName>
</protein>